<organism>
    <name type="scientific">Homo sapiens</name>
    <name type="common">Human</name>
    <dbReference type="NCBI Taxonomy" id="9606"/>
    <lineage>
        <taxon>Eukaryota</taxon>
        <taxon>Metazoa</taxon>
        <taxon>Chordata</taxon>
        <taxon>Craniata</taxon>
        <taxon>Vertebrata</taxon>
        <taxon>Euteleostomi</taxon>
        <taxon>Mammalia</taxon>
        <taxon>Eutheria</taxon>
        <taxon>Euarchontoglires</taxon>
        <taxon>Primates</taxon>
        <taxon>Haplorrhini</taxon>
        <taxon>Catarrhini</taxon>
        <taxon>Hominidae</taxon>
        <taxon>Homo</taxon>
    </lineage>
</organism>
<accession>O43299</accession>
<accession>Q8N3X2</accession>
<accession>Q96H80</accession>
<reference key="1">
    <citation type="journal article" date="2003" name="Nature">
        <title>The DNA sequence of human chromosome 7.</title>
        <authorList>
            <person name="Hillier L.W."/>
            <person name="Fulton R.S."/>
            <person name="Fulton L.A."/>
            <person name="Graves T.A."/>
            <person name="Pepin K.H."/>
            <person name="Wagner-McPherson C."/>
            <person name="Layman D."/>
            <person name="Maas J."/>
            <person name="Jaeger S."/>
            <person name="Walker R."/>
            <person name="Wylie K."/>
            <person name="Sekhon M."/>
            <person name="Becker M.C."/>
            <person name="O'Laughlin M.D."/>
            <person name="Schaller M.E."/>
            <person name="Fewell G.A."/>
            <person name="Delehaunty K.D."/>
            <person name="Miner T.L."/>
            <person name="Nash W.E."/>
            <person name="Cordes M."/>
            <person name="Du H."/>
            <person name="Sun H."/>
            <person name="Edwards J."/>
            <person name="Bradshaw-Cordum H."/>
            <person name="Ali J."/>
            <person name="Andrews S."/>
            <person name="Isak A."/>
            <person name="Vanbrunt A."/>
            <person name="Nguyen C."/>
            <person name="Du F."/>
            <person name="Lamar B."/>
            <person name="Courtney L."/>
            <person name="Kalicki J."/>
            <person name="Ozersky P."/>
            <person name="Bielicki L."/>
            <person name="Scott K."/>
            <person name="Holmes A."/>
            <person name="Harkins R."/>
            <person name="Harris A."/>
            <person name="Strong C.M."/>
            <person name="Hou S."/>
            <person name="Tomlinson C."/>
            <person name="Dauphin-Kohlberg S."/>
            <person name="Kozlowicz-Reilly A."/>
            <person name="Leonard S."/>
            <person name="Rohlfing T."/>
            <person name="Rock S.M."/>
            <person name="Tin-Wollam A.-M."/>
            <person name="Abbott A."/>
            <person name="Minx P."/>
            <person name="Maupin R."/>
            <person name="Strowmatt C."/>
            <person name="Latreille P."/>
            <person name="Miller N."/>
            <person name="Johnson D."/>
            <person name="Murray J."/>
            <person name="Woessner J.P."/>
            <person name="Wendl M.C."/>
            <person name="Yang S.-P."/>
            <person name="Schultz B.R."/>
            <person name="Wallis J.W."/>
            <person name="Spieth J."/>
            <person name="Bieri T.A."/>
            <person name="Nelson J.O."/>
            <person name="Berkowicz N."/>
            <person name="Wohldmann P.E."/>
            <person name="Cook L.L."/>
            <person name="Hickenbotham M.T."/>
            <person name="Eldred J."/>
            <person name="Williams D."/>
            <person name="Bedell J.A."/>
            <person name="Mardis E.R."/>
            <person name="Clifton S.W."/>
            <person name="Chissoe S.L."/>
            <person name="Marra M.A."/>
            <person name="Raymond C."/>
            <person name="Haugen E."/>
            <person name="Gillett W."/>
            <person name="Zhou Y."/>
            <person name="James R."/>
            <person name="Phelps K."/>
            <person name="Iadanoto S."/>
            <person name="Bubb K."/>
            <person name="Simms E."/>
            <person name="Levy R."/>
            <person name="Clendenning J."/>
            <person name="Kaul R."/>
            <person name="Kent W.J."/>
            <person name="Furey T.S."/>
            <person name="Baertsch R.A."/>
            <person name="Brent M.R."/>
            <person name="Keibler E."/>
            <person name="Flicek P."/>
            <person name="Bork P."/>
            <person name="Suyama M."/>
            <person name="Bailey J.A."/>
            <person name="Portnoy M.E."/>
            <person name="Torrents D."/>
            <person name="Chinwalla A.T."/>
            <person name="Gish W.R."/>
            <person name="Eddy S.R."/>
            <person name="McPherson J.D."/>
            <person name="Olson M.V."/>
            <person name="Eichler E.E."/>
            <person name="Green E.D."/>
            <person name="Waterston R.H."/>
            <person name="Wilson R.K."/>
        </authorList>
    </citation>
    <scope>NUCLEOTIDE SEQUENCE [LARGE SCALE GENOMIC DNA]</scope>
</reference>
<reference key="2">
    <citation type="journal article" date="1997" name="DNA Res.">
        <title>Prediction of the coding sequences of unidentified human genes. VIII. 78 new cDNA clones from brain which code for large proteins in vitro.</title>
        <authorList>
            <person name="Ishikawa K."/>
            <person name="Nagase T."/>
            <person name="Nakajima D."/>
            <person name="Seki N."/>
            <person name="Ohira M."/>
            <person name="Miyajima N."/>
            <person name="Tanaka A."/>
            <person name="Kotani H."/>
            <person name="Nomura N."/>
            <person name="Ohara O."/>
        </authorList>
    </citation>
    <scope>NUCLEOTIDE SEQUENCE [LARGE SCALE MRNA] (ISOFORM 2)</scope>
    <source>
        <tissue>Brain</tissue>
    </source>
</reference>
<reference key="3">
    <citation type="journal article" date="2004" name="Genome Res.">
        <title>The status, quality, and expansion of the NIH full-length cDNA project: the Mammalian Gene Collection (MGC).</title>
        <authorList>
            <consortium name="The MGC Project Team"/>
        </authorList>
    </citation>
    <scope>NUCLEOTIDE SEQUENCE [LARGE SCALE MRNA] (ISOFORM 3)</scope>
    <scope>NUCLEOTIDE SEQUENCE [LARGE SCALE MRNA] OF 417-807 (ISOFORM 1)</scope>
    <source>
        <tissue>Brain</tissue>
    </source>
</reference>
<reference key="4">
    <citation type="journal article" date="2010" name="PLoS Biol.">
        <title>A genome-scale DNA repair RNAi screen identifies SPG48 as a novel gene associated with hereditary spastic paraplegia.</title>
        <authorList>
            <person name="Slabicki M."/>
            <person name="Theis M."/>
            <person name="Krastev D.B."/>
            <person name="Samsonov S."/>
            <person name="Mundwiller E."/>
            <person name="Junqueira M."/>
            <person name="Paszkowski-Rogacz M."/>
            <person name="Teyra J."/>
            <person name="Heninger A.K."/>
            <person name="Poser I."/>
            <person name="Prieur F."/>
            <person name="Truchetto J."/>
            <person name="Confavreux C."/>
            <person name="Marelli C."/>
            <person name="Durr A."/>
            <person name="Camdessanche J.P."/>
            <person name="Brice A."/>
            <person name="Shevchenko A."/>
            <person name="Pisabarro M.T."/>
            <person name="Stevanin G."/>
            <person name="Buchholz F."/>
        </authorList>
    </citation>
    <scope>FUNCTION</scope>
    <scope>SUBCELLULAR LOCATION</scope>
    <scope>INTERACTION WITH AP5S1; AP5B1; ZFYVE26 AND SPG11</scope>
    <scope>INVOLVEMENT IN SPG48</scope>
</reference>
<reference key="5">
    <citation type="journal article" date="2011" name="PLoS Biol.">
        <title>The fifth adaptor protein complex.</title>
        <authorList>
            <person name="Hirst J."/>
            <person name="Barlow L.D."/>
            <person name="Francisco G.C."/>
            <person name="Sahlender D.A."/>
            <person name="Seaman M.N."/>
            <person name="Dacks J.B."/>
            <person name="Robinson M.S."/>
        </authorList>
    </citation>
    <scope>FUNCTION IN ENDOSOME TRANSPORT</scope>
</reference>
<reference key="6">
    <citation type="journal article" date="2013" name="J. Proteome Res.">
        <title>Toward a comprehensive characterization of a human cancer cell phosphoproteome.</title>
        <authorList>
            <person name="Zhou H."/>
            <person name="Di Palma S."/>
            <person name="Preisinger C."/>
            <person name="Peng M."/>
            <person name="Polat A.N."/>
            <person name="Heck A.J."/>
            <person name="Mohammed S."/>
        </authorList>
    </citation>
    <scope>IDENTIFICATION BY MASS SPECTROMETRY [LARGE SCALE ANALYSIS]</scope>
    <source>
        <tissue>Cervix carcinoma</tissue>
    </source>
</reference>
<feature type="chain" id="PRO_0000261357" description="AP-5 complex subunit zeta-1">
    <location>
        <begin position="1"/>
        <end position="807"/>
    </location>
</feature>
<feature type="splice variant" id="VSP_021672" description="In isoform 3." evidence="3">
    <location>
        <begin position="1"/>
        <end position="156"/>
    </location>
</feature>
<feature type="splice variant" id="VSP_021673" description="In isoform 2." evidence="4">
    <original>SVLSSQFLALCTLKPSLVVELARD</original>
    <variation>RPDACRPILVPL</variation>
    <location>
        <begin position="602"/>
        <end position="625"/>
    </location>
</feature>
<feature type="splice variant" id="VSP_021674" description="In isoform 3." evidence="3">
    <original>S</original>
    <variation>R</variation>
    <location>
        <position position="602"/>
    </location>
</feature>
<feature type="splice variant" id="VSP_021675" description="In isoform 3." evidence="3">
    <location>
        <begin position="603"/>
        <end position="807"/>
    </location>
</feature>
<feature type="splice variant" id="VSP_021676" description="In isoform 2." evidence="4">
    <location>
        <begin position="626"/>
        <end position="807"/>
    </location>
</feature>
<feature type="sequence variant" id="VAR_049511" description="In dbSNP:rs11549839.">
    <original>S</original>
    <variation>C</variation>
    <location>
        <position position="94"/>
    </location>
</feature>
<sequence length="807" mass="88605">MFSAGAESLLHQAREIQDEELKKFCSRICKLLQAEDLGPDTLDSLQRLFLIISATKYSRRLEKTCVDLLQATLGLPACPEQLQVLCAAILREMSPSDSLSLAWDHTQNSRQLSLVASVLLAQGDRNEEVRAVGQGVLRALESRQPEGPSLRHLLPVMAKVVVLSPGTLQEDQATLLSKRLVDWLRYASLQQGLPHSGGFFSTPRARQPGPVTEVDGAVATDFFTVLSSGHRFTDDQWLNVQAFSMLRAWLLHSGPEGPGTLDTDDRSEQEGSTLSVISATSSAGRLLPPRERLREVAFEYCQRLIEQSNRRALRKGDSDLQKACLVEAVLVLDVLCRQDPSFLYRSLSCLKALHGRVRGDPASVRVLLPLAHFFLSHGEAAAVDSEAVYQHLFTRIPVEQFHSPMLAFEFIQFCRDNLHLFSGHLSTLRLSFPNLFKFLAWNSPPLTSEFVALLPALVDAGTALEMLHALLDLPCLTAVLDLQLRSAPAASERPLWDTSLRAPSCLEAFRDPQFQGLFQYLLRPKASGATERLAPLHQLLQPMAGCARVAQCAQAVPTLLQAFFSAVTQVADGSLINQLALLLLGRSDSLYPAPGYAAGVHSVLSSQFLALCTLKPSLVVELARDLLEFLGSVNGLCSRASLVTSVVWAIGEYLSVTYDRRCTVEQINKFFEALEALLFEVTQCRPSAALPRCPPQVVTVLMTTLTKLASRSQDLIPRASLLLSKMRTLAHSPATSSTHSEEGAEAIRTRATELLTLLKMPSVAQFVLTPSTEVCSPRYHRDANTALPLALRTVSRLVEREAGLMPG</sequence>
<evidence type="ECO:0000269" key="1">
    <source>
    </source>
</evidence>
<evidence type="ECO:0000269" key="2">
    <source>
    </source>
</evidence>
<evidence type="ECO:0000303" key="3">
    <source>
    </source>
</evidence>
<evidence type="ECO:0000303" key="4">
    <source>
    </source>
</evidence>
<evidence type="ECO:0000305" key="5"/>
<gene>
    <name type="primary">AP5Z1</name>
    <name type="synonym">KIAA0415</name>
    <name type="synonym">SPG48</name>
</gene>
<proteinExistence type="evidence at protein level"/>
<name>AP5Z1_HUMAN</name>
<dbReference type="EMBL" id="AC092610">
    <property type="status" value="NOT_ANNOTATED_CDS"/>
    <property type="molecule type" value="Genomic_DNA"/>
</dbReference>
<dbReference type="EMBL" id="AB007875">
    <property type="protein sequence ID" value="BAA24845.1"/>
    <property type="status" value="ALT_INIT"/>
    <property type="molecule type" value="mRNA"/>
</dbReference>
<dbReference type="EMBL" id="BC008841">
    <property type="protein sequence ID" value="AAH08841.2"/>
    <property type="molecule type" value="mRNA"/>
</dbReference>
<dbReference type="EMBL" id="BC037399">
    <property type="protein sequence ID" value="AAH37399.1"/>
    <property type="molecule type" value="mRNA"/>
</dbReference>
<dbReference type="CCDS" id="CCDS47528.1">
    <molecule id="O43299-1"/>
</dbReference>
<dbReference type="PIR" id="T00054">
    <property type="entry name" value="T00054"/>
</dbReference>
<dbReference type="RefSeq" id="NP_055670.1">
    <molecule id="O43299-1"/>
    <property type="nucleotide sequence ID" value="NM_014855.3"/>
</dbReference>
<dbReference type="BioGRID" id="115236">
    <property type="interactions" value="35"/>
</dbReference>
<dbReference type="ComplexPortal" id="CPX-5181">
    <property type="entry name" value="AP-5 Adaptor complex"/>
</dbReference>
<dbReference type="CORUM" id="O43299"/>
<dbReference type="FunCoup" id="O43299">
    <property type="interactions" value="1965"/>
</dbReference>
<dbReference type="IntAct" id="O43299">
    <property type="interactions" value="27"/>
</dbReference>
<dbReference type="MINT" id="O43299"/>
<dbReference type="STRING" id="9606.ENSP00000497815"/>
<dbReference type="GlyGen" id="O43299">
    <property type="glycosylation" value="1 site, 1 O-linked glycan (1 site)"/>
</dbReference>
<dbReference type="iPTMnet" id="O43299"/>
<dbReference type="PhosphoSitePlus" id="O43299"/>
<dbReference type="BioMuta" id="AP5Z1"/>
<dbReference type="jPOST" id="O43299"/>
<dbReference type="MassIVE" id="O43299"/>
<dbReference type="PaxDb" id="9606-ENSP00000297562"/>
<dbReference type="PeptideAtlas" id="O43299"/>
<dbReference type="ProteomicsDB" id="48872">
    <molecule id="O43299-1"/>
</dbReference>
<dbReference type="ProteomicsDB" id="48873">
    <molecule id="O43299-2"/>
</dbReference>
<dbReference type="ProteomicsDB" id="48874">
    <molecule id="O43299-3"/>
</dbReference>
<dbReference type="Pumba" id="O43299"/>
<dbReference type="Antibodypedia" id="48203">
    <property type="antibodies" value="75 antibodies from 16 providers"/>
</dbReference>
<dbReference type="DNASU" id="9907"/>
<dbReference type="Ensembl" id="ENST00000648925.1">
    <molecule id="O43299-2"/>
    <property type="protein sequence ID" value="ENSP00000496830.1"/>
    <property type="gene ID" value="ENSG00000242802.9"/>
</dbReference>
<dbReference type="Ensembl" id="ENST00000649063.2">
    <molecule id="O43299-1"/>
    <property type="protein sequence ID" value="ENSP00000497815.1"/>
    <property type="gene ID" value="ENSG00000242802.9"/>
</dbReference>
<dbReference type="GeneID" id="9907"/>
<dbReference type="KEGG" id="hsa:9907"/>
<dbReference type="MANE-Select" id="ENST00000649063.2">
    <property type="protein sequence ID" value="ENSP00000497815.1"/>
    <property type="RefSeq nucleotide sequence ID" value="NM_014855.3"/>
    <property type="RefSeq protein sequence ID" value="NP_055670.1"/>
</dbReference>
<dbReference type="UCSC" id="uc003sne.4">
    <molecule id="O43299-1"/>
    <property type="organism name" value="human"/>
</dbReference>
<dbReference type="AGR" id="HGNC:22197"/>
<dbReference type="CTD" id="9907"/>
<dbReference type="DisGeNET" id="9907"/>
<dbReference type="GeneCards" id="AP5Z1"/>
<dbReference type="HGNC" id="HGNC:22197">
    <property type="gene designation" value="AP5Z1"/>
</dbReference>
<dbReference type="HPA" id="ENSG00000242802">
    <property type="expression patterns" value="Low tissue specificity"/>
</dbReference>
<dbReference type="MalaCards" id="AP5Z1"/>
<dbReference type="MIM" id="613647">
    <property type="type" value="phenotype"/>
</dbReference>
<dbReference type="MIM" id="613653">
    <property type="type" value="gene"/>
</dbReference>
<dbReference type="neXtProt" id="NX_O43299"/>
<dbReference type="OpenTargets" id="ENSG00000242802"/>
<dbReference type="Orphanet" id="306511">
    <property type="disease" value="Autosomal recessive spastic paraplegia type 48"/>
</dbReference>
<dbReference type="PharmGKB" id="PA162392841"/>
<dbReference type="VEuPathDB" id="HostDB:ENSG00000242802"/>
<dbReference type="eggNOG" id="ENOG502QVBK">
    <property type="taxonomic scope" value="Eukaryota"/>
</dbReference>
<dbReference type="GeneTree" id="ENSGT00390000017592"/>
<dbReference type="HOGENOM" id="CLU_019553_0_0_1"/>
<dbReference type="InParanoid" id="O43299"/>
<dbReference type="OMA" id="LMLAYEF"/>
<dbReference type="OrthoDB" id="744564at2759"/>
<dbReference type="PAN-GO" id="O43299">
    <property type="GO annotations" value="0 GO annotations based on evolutionary models"/>
</dbReference>
<dbReference type="PhylomeDB" id="O43299"/>
<dbReference type="TreeFam" id="TF331050"/>
<dbReference type="PathwayCommons" id="O43299"/>
<dbReference type="SignaLink" id="O43299"/>
<dbReference type="BioGRID-ORCS" id="9907">
    <property type="hits" value="5 hits in 1161 CRISPR screens"/>
</dbReference>
<dbReference type="ChiTaRS" id="AP5Z1">
    <property type="organism name" value="human"/>
</dbReference>
<dbReference type="GenomeRNAi" id="9907"/>
<dbReference type="Pharos" id="O43299">
    <property type="development level" value="Tbio"/>
</dbReference>
<dbReference type="PRO" id="PR:O43299"/>
<dbReference type="Proteomes" id="UP000005640">
    <property type="component" value="Chromosome 7"/>
</dbReference>
<dbReference type="RNAct" id="O43299">
    <property type="molecule type" value="protein"/>
</dbReference>
<dbReference type="Bgee" id="ENSG00000242802">
    <property type="expression patterns" value="Expressed in granulocyte and 150 other cell types or tissues"/>
</dbReference>
<dbReference type="ExpressionAtlas" id="O43299">
    <property type="expression patterns" value="baseline and differential"/>
</dbReference>
<dbReference type="GO" id="GO:0044599">
    <property type="term" value="C:AP-5 adaptor complex"/>
    <property type="evidence" value="ECO:0000303"/>
    <property type="project" value="ComplexPortal"/>
</dbReference>
<dbReference type="GO" id="GO:0030119">
    <property type="term" value="C:AP-type membrane coat adaptor complex"/>
    <property type="evidence" value="ECO:0000303"/>
    <property type="project" value="UniProtKB"/>
</dbReference>
<dbReference type="GO" id="GO:0005737">
    <property type="term" value="C:cytoplasm"/>
    <property type="evidence" value="ECO:0000314"/>
    <property type="project" value="UniProtKB"/>
</dbReference>
<dbReference type="GO" id="GO:0005770">
    <property type="term" value="C:late endosome"/>
    <property type="evidence" value="ECO:0000303"/>
    <property type="project" value="ComplexPortal"/>
</dbReference>
<dbReference type="GO" id="GO:0005764">
    <property type="term" value="C:lysosome"/>
    <property type="evidence" value="ECO:0007669"/>
    <property type="project" value="Ensembl"/>
</dbReference>
<dbReference type="GO" id="GO:0016607">
    <property type="term" value="C:nuclear speck"/>
    <property type="evidence" value="ECO:0000314"/>
    <property type="project" value="HPA"/>
</dbReference>
<dbReference type="GO" id="GO:0005654">
    <property type="term" value="C:nucleoplasm"/>
    <property type="evidence" value="ECO:0000314"/>
    <property type="project" value="HPA"/>
</dbReference>
<dbReference type="GO" id="GO:0005634">
    <property type="term" value="C:nucleus"/>
    <property type="evidence" value="ECO:0000314"/>
    <property type="project" value="UniProtKB"/>
</dbReference>
<dbReference type="GO" id="GO:0000045">
    <property type="term" value="P:autophagosome assembly"/>
    <property type="evidence" value="ECO:0007669"/>
    <property type="project" value="Ensembl"/>
</dbReference>
<dbReference type="GO" id="GO:0061564">
    <property type="term" value="P:axon development"/>
    <property type="evidence" value="ECO:0007669"/>
    <property type="project" value="Ensembl"/>
</dbReference>
<dbReference type="GO" id="GO:0000724">
    <property type="term" value="P:double-strand break repair via homologous recombination"/>
    <property type="evidence" value="ECO:0000315"/>
    <property type="project" value="UniProtKB"/>
</dbReference>
<dbReference type="GO" id="GO:0016197">
    <property type="term" value="P:endosomal transport"/>
    <property type="evidence" value="ECO:0000315"/>
    <property type="project" value="UniProtKB"/>
</dbReference>
<dbReference type="GO" id="GO:0010467">
    <property type="term" value="P:gene expression"/>
    <property type="evidence" value="ECO:0007669"/>
    <property type="project" value="Ensembl"/>
</dbReference>
<dbReference type="GO" id="GO:0007030">
    <property type="term" value="P:Golgi organization"/>
    <property type="evidence" value="ECO:0007669"/>
    <property type="project" value="Ensembl"/>
</dbReference>
<dbReference type="GO" id="GO:0006886">
    <property type="term" value="P:intracellular protein transport"/>
    <property type="evidence" value="ECO:0007669"/>
    <property type="project" value="Ensembl"/>
</dbReference>
<dbReference type="GO" id="GO:0034499">
    <property type="term" value="P:late endosome to Golgi transport"/>
    <property type="evidence" value="ECO:0007669"/>
    <property type="project" value="Ensembl"/>
</dbReference>
<dbReference type="GO" id="GO:1905146">
    <property type="term" value="P:lysosomal protein catabolic process"/>
    <property type="evidence" value="ECO:0007669"/>
    <property type="project" value="Ensembl"/>
</dbReference>
<dbReference type="GO" id="GO:0007040">
    <property type="term" value="P:lysosome organization"/>
    <property type="evidence" value="ECO:0007669"/>
    <property type="project" value="Ensembl"/>
</dbReference>
<dbReference type="GO" id="GO:0016192">
    <property type="term" value="P:vesicle-mediated transport"/>
    <property type="evidence" value="ECO:0000303"/>
    <property type="project" value="ComplexPortal"/>
</dbReference>
<dbReference type="FunFam" id="1.25.10.10:FF:000626">
    <property type="entry name" value="Adaptor related protein complex 5 subunit zeta 1"/>
    <property type="match status" value="1"/>
</dbReference>
<dbReference type="Gene3D" id="1.25.10.10">
    <property type="entry name" value="Leucine-rich Repeat Variant"/>
    <property type="match status" value="1"/>
</dbReference>
<dbReference type="InterPro" id="IPR028222">
    <property type="entry name" value="AP5Z1"/>
</dbReference>
<dbReference type="InterPro" id="IPR055450">
    <property type="entry name" value="AP5Z1_ARM"/>
</dbReference>
<dbReference type="InterPro" id="IPR011989">
    <property type="entry name" value="ARM-like"/>
</dbReference>
<dbReference type="InterPro" id="IPR056856">
    <property type="entry name" value="TPR_AP5Z1_C"/>
</dbReference>
<dbReference type="InterPro" id="IPR056857">
    <property type="entry name" value="TPR_AP5Z1_N"/>
</dbReference>
<dbReference type="PANTHER" id="PTHR46488">
    <property type="entry name" value="AP-5 COMPLEX SUBUNIT ZETA-1"/>
    <property type="match status" value="1"/>
</dbReference>
<dbReference type="PANTHER" id="PTHR46488:SF1">
    <property type="entry name" value="AP-5 COMPLEX SUBUNIT ZETA-1"/>
    <property type="match status" value="1"/>
</dbReference>
<dbReference type="Pfam" id="PF14764">
    <property type="entry name" value="SPG48"/>
    <property type="match status" value="1"/>
</dbReference>
<dbReference type="Pfam" id="PF25153">
    <property type="entry name" value="TPR_AP5Z1"/>
    <property type="match status" value="1"/>
</dbReference>
<dbReference type="Pfam" id="PF25154">
    <property type="entry name" value="TPR_AP5Z1_C"/>
    <property type="match status" value="1"/>
</dbReference>
<protein>
    <recommendedName>
        <fullName>AP-5 complex subunit zeta-1</fullName>
    </recommendedName>
    <alternativeName>
        <fullName>Adaptor-related protein complex 5 zeta subunit</fullName>
        <shortName>Zeta5</shortName>
    </alternativeName>
</protein>
<keyword id="KW-0025">Alternative splicing</keyword>
<keyword id="KW-0963">Cytoplasm</keyword>
<keyword id="KW-0227">DNA damage</keyword>
<keyword id="KW-0234">DNA repair</keyword>
<keyword id="KW-0890">Hereditary spastic paraplegia</keyword>
<keyword id="KW-0523">Neurodegeneration</keyword>
<keyword id="KW-0539">Nucleus</keyword>
<keyword id="KW-0653">Protein transport</keyword>
<keyword id="KW-1267">Proteomics identification</keyword>
<keyword id="KW-1185">Reference proteome</keyword>
<keyword id="KW-0813">Transport</keyword>
<comment type="function">
    <text evidence="1 2">As part of AP-5, a probable fifth adaptor protein complex it may be involved in endosomal transport. According to PubMed:20613862 it is a putative helicase required for efficient homologous recombination DNA double-strand break repair.</text>
</comment>
<comment type="subunit">
    <text evidence="1">Probably part of the adaptor protein complex 5 (AP-5) a tetramer composed of AP5B1, AP5M1, AP5S1 and AP5Z1. Interacts with ZFYVE26 and SPG11.</text>
</comment>
<comment type="interaction">
    <interactant intactId="EBI-740938">
        <id>O43299</id>
    </interactant>
    <interactant intactId="EBI-1042703">
        <id>Q8N1F7</id>
        <label>NUP93</label>
    </interactant>
    <organismsDiffer>false</organismsDiffer>
    <experiments>3</experiments>
</comment>
<comment type="subcellular location">
    <subcellularLocation>
        <location evidence="1">Cytoplasm</location>
    </subcellularLocation>
    <subcellularLocation>
        <location evidence="1">Nucleus</location>
    </subcellularLocation>
    <text evidence="1">By SDS-PAGE, 2 isoforms have been observed, the shorter seems to be predominantly nuclear and the longer is mostly cytoplasmic.</text>
</comment>
<comment type="alternative products">
    <event type="alternative splicing"/>
    <isoform>
        <id>O43299-1</id>
        <name>1</name>
        <sequence type="displayed"/>
    </isoform>
    <isoform>
        <id>O43299-2</id>
        <name>2</name>
        <sequence type="described" ref="VSP_021673 VSP_021676"/>
    </isoform>
    <isoform>
        <id>O43299-3</id>
        <name>3</name>
        <sequence type="described" ref="VSP_021672 VSP_021674 VSP_021675"/>
    </isoform>
</comment>
<comment type="disease" evidence="1">
    <disease id="DI-02933">
        <name>Spastic paraplegia 48, autosomal recessive</name>
        <acronym>SPG48</acronym>
        <description>A form of spastic paraplegia, a neurodegenerative disorder characterized by a slow, gradual, progressive weakness and spasticity of the lower limbs. Rate of progression and the severity of symptoms are quite variable. Initial symptoms may include difficulty with balance, weakness and stiffness in the legs, muscle spasms, and dragging the toes when walking. In some forms of the disorder, bladder symptoms (such as incontinence) may appear, or the weakness and stiffness may spread to other parts of the body.</description>
        <dbReference type="MIM" id="613647"/>
    </disease>
    <text>The disease is caused by variants affecting the gene represented in this entry.</text>
</comment>
<comment type="sequence caution" evidence="5">
    <conflict type="erroneous initiation">
        <sequence resource="EMBL-CDS" id="BAA24845"/>
    </conflict>
    <text>Extended N-terminus.</text>
</comment>